<gene>
    <name evidence="1" type="primary">alaS</name>
    <name type="ordered locus">BCE33L4132</name>
</gene>
<accession>Q634F6</accession>
<protein>
    <recommendedName>
        <fullName evidence="1">Alanine--tRNA ligase</fullName>
        <ecNumber evidence="1">6.1.1.7</ecNumber>
    </recommendedName>
    <alternativeName>
        <fullName evidence="1">Alanyl-tRNA synthetase</fullName>
        <shortName evidence="1">AlaRS</shortName>
    </alternativeName>
</protein>
<reference key="1">
    <citation type="journal article" date="2006" name="J. Bacteriol.">
        <title>Pathogenomic sequence analysis of Bacillus cereus and Bacillus thuringiensis isolates closely related to Bacillus anthracis.</title>
        <authorList>
            <person name="Han C.S."/>
            <person name="Xie G."/>
            <person name="Challacombe J.F."/>
            <person name="Altherr M.R."/>
            <person name="Bhotika S.S."/>
            <person name="Bruce D."/>
            <person name="Campbell C.S."/>
            <person name="Campbell M.L."/>
            <person name="Chen J."/>
            <person name="Chertkov O."/>
            <person name="Cleland C."/>
            <person name="Dimitrijevic M."/>
            <person name="Doggett N.A."/>
            <person name="Fawcett J.J."/>
            <person name="Glavina T."/>
            <person name="Goodwin L.A."/>
            <person name="Hill K.K."/>
            <person name="Hitchcock P."/>
            <person name="Jackson P.J."/>
            <person name="Keim P."/>
            <person name="Kewalramani A.R."/>
            <person name="Longmire J."/>
            <person name="Lucas S."/>
            <person name="Malfatti S."/>
            <person name="McMurry K."/>
            <person name="Meincke L.J."/>
            <person name="Misra M."/>
            <person name="Moseman B.L."/>
            <person name="Mundt M."/>
            <person name="Munk A.C."/>
            <person name="Okinaka R.T."/>
            <person name="Parson-Quintana B."/>
            <person name="Reilly L.P."/>
            <person name="Richardson P."/>
            <person name="Robinson D.L."/>
            <person name="Rubin E."/>
            <person name="Saunders E."/>
            <person name="Tapia R."/>
            <person name="Tesmer J.G."/>
            <person name="Thayer N."/>
            <person name="Thompson L.S."/>
            <person name="Tice H."/>
            <person name="Ticknor L.O."/>
            <person name="Wills P.L."/>
            <person name="Brettin T.S."/>
            <person name="Gilna P."/>
        </authorList>
    </citation>
    <scope>NUCLEOTIDE SEQUENCE [LARGE SCALE GENOMIC DNA]</scope>
    <source>
        <strain>ZK / E33L</strain>
    </source>
</reference>
<name>SYA_BACCZ</name>
<dbReference type="EC" id="6.1.1.7" evidence="1"/>
<dbReference type="EMBL" id="CP000001">
    <property type="protein sequence ID" value="AAU16138.1"/>
    <property type="molecule type" value="Genomic_DNA"/>
</dbReference>
<dbReference type="RefSeq" id="WP_000811836.1">
    <property type="nucleotide sequence ID" value="NZ_CP009968.1"/>
</dbReference>
<dbReference type="SMR" id="Q634F6"/>
<dbReference type="GeneID" id="75087523"/>
<dbReference type="KEGG" id="bcz:BCE33L4132"/>
<dbReference type="PATRIC" id="fig|288681.22.peg.1252"/>
<dbReference type="Proteomes" id="UP000002612">
    <property type="component" value="Chromosome"/>
</dbReference>
<dbReference type="GO" id="GO:0005829">
    <property type="term" value="C:cytosol"/>
    <property type="evidence" value="ECO:0007669"/>
    <property type="project" value="TreeGrafter"/>
</dbReference>
<dbReference type="GO" id="GO:0004813">
    <property type="term" value="F:alanine-tRNA ligase activity"/>
    <property type="evidence" value="ECO:0007669"/>
    <property type="project" value="UniProtKB-UniRule"/>
</dbReference>
<dbReference type="GO" id="GO:0002161">
    <property type="term" value="F:aminoacyl-tRNA deacylase activity"/>
    <property type="evidence" value="ECO:0007669"/>
    <property type="project" value="TreeGrafter"/>
</dbReference>
<dbReference type="GO" id="GO:0005524">
    <property type="term" value="F:ATP binding"/>
    <property type="evidence" value="ECO:0007669"/>
    <property type="project" value="UniProtKB-UniRule"/>
</dbReference>
<dbReference type="GO" id="GO:0140096">
    <property type="term" value="F:catalytic activity, acting on a protein"/>
    <property type="evidence" value="ECO:0007669"/>
    <property type="project" value="UniProtKB-ARBA"/>
</dbReference>
<dbReference type="GO" id="GO:0016740">
    <property type="term" value="F:transferase activity"/>
    <property type="evidence" value="ECO:0007669"/>
    <property type="project" value="UniProtKB-ARBA"/>
</dbReference>
<dbReference type="GO" id="GO:0000049">
    <property type="term" value="F:tRNA binding"/>
    <property type="evidence" value="ECO:0007669"/>
    <property type="project" value="UniProtKB-KW"/>
</dbReference>
<dbReference type="GO" id="GO:0008270">
    <property type="term" value="F:zinc ion binding"/>
    <property type="evidence" value="ECO:0007669"/>
    <property type="project" value="UniProtKB-UniRule"/>
</dbReference>
<dbReference type="GO" id="GO:0006419">
    <property type="term" value="P:alanyl-tRNA aminoacylation"/>
    <property type="evidence" value="ECO:0007669"/>
    <property type="project" value="UniProtKB-UniRule"/>
</dbReference>
<dbReference type="CDD" id="cd00673">
    <property type="entry name" value="AlaRS_core"/>
    <property type="match status" value="1"/>
</dbReference>
<dbReference type="FunFam" id="2.40.30.130:FF:000006">
    <property type="entry name" value="Alanine--tRNA ligase"/>
    <property type="match status" value="1"/>
</dbReference>
<dbReference type="FunFam" id="3.10.310.40:FF:000001">
    <property type="entry name" value="Alanine--tRNA ligase"/>
    <property type="match status" value="1"/>
</dbReference>
<dbReference type="FunFam" id="3.30.54.20:FF:000001">
    <property type="entry name" value="Alanine--tRNA ligase"/>
    <property type="match status" value="1"/>
</dbReference>
<dbReference type="FunFam" id="3.30.930.10:FF:000046">
    <property type="entry name" value="Alanine--tRNA ligase"/>
    <property type="match status" value="1"/>
</dbReference>
<dbReference type="FunFam" id="3.30.980.10:FF:000004">
    <property type="entry name" value="Alanine--tRNA ligase, cytoplasmic"/>
    <property type="match status" value="1"/>
</dbReference>
<dbReference type="Gene3D" id="2.40.30.130">
    <property type="match status" value="1"/>
</dbReference>
<dbReference type="Gene3D" id="3.10.310.40">
    <property type="match status" value="1"/>
</dbReference>
<dbReference type="Gene3D" id="3.30.54.20">
    <property type="match status" value="1"/>
</dbReference>
<dbReference type="Gene3D" id="6.10.250.550">
    <property type="match status" value="1"/>
</dbReference>
<dbReference type="Gene3D" id="3.30.930.10">
    <property type="entry name" value="Bira Bifunctional Protein, Domain 2"/>
    <property type="match status" value="1"/>
</dbReference>
<dbReference type="Gene3D" id="3.30.980.10">
    <property type="entry name" value="Threonyl-trna Synthetase, Chain A, domain 2"/>
    <property type="match status" value="1"/>
</dbReference>
<dbReference type="HAMAP" id="MF_00036_B">
    <property type="entry name" value="Ala_tRNA_synth_B"/>
    <property type="match status" value="1"/>
</dbReference>
<dbReference type="InterPro" id="IPR045864">
    <property type="entry name" value="aa-tRNA-synth_II/BPL/LPL"/>
</dbReference>
<dbReference type="InterPro" id="IPR002318">
    <property type="entry name" value="Ala-tRNA-lgiase_IIc"/>
</dbReference>
<dbReference type="InterPro" id="IPR018162">
    <property type="entry name" value="Ala-tRNA-ligase_IIc_anticod-bd"/>
</dbReference>
<dbReference type="InterPro" id="IPR018165">
    <property type="entry name" value="Ala-tRNA-synth_IIc_core"/>
</dbReference>
<dbReference type="InterPro" id="IPR018164">
    <property type="entry name" value="Ala-tRNA-synth_IIc_N"/>
</dbReference>
<dbReference type="InterPro" id="IPR050058">
    <property type="entry name" value="Ala-tRNA_ligase"/>
</dbReference>
<dbReference type="InterPro" id="IPR023033">
    <property type="entry name" value="Ala_tRNA_ligase_euk/bac"/>
</dbReference>
<dbReference type="InterPro" id="IPR003156">
    <property type="entry name" value="DHHA1_dom"/>
</dbReference>
<dbReference type="InterPro" id="IPR018163">
    <property type="entry name" value="Thr/Ala-tRNA-synth_IIc_edit"/>
</dbReference>
<dbReference type="InterPro" id="IPR009000">
    <property type="entry name" value="Transl_B-barrel_sf"/>
</dbReference>
<dbReference type="InterPro" id="IPR012947">
    <property type="entry name" value="tRNA_SAD"/>
</dbReference>
<dbReference type="NCBIfam" id="TIGR00344">
    <property type="entry name" value="alaS"/>
    <property type="match status" value="1"/>
</dbReference>
<dbReference type="PANTHER" id="PTHR11777:SF9">
    <property type="entry name" value="ALANINE--TRNA LIGASE, CYTOPLASMIC"/>
    <property type="match status" value="1"/>
</dbReference>
<dbReference type="PANTHER" id="PTHR11777">
    <property type="entry name" value="ALANYL-TRNA SYNTHETASE"/>
    <property type="match status" value="1"/>
</dbReference>
<dbReference type="Pfam" id="PF02272">
    <property type="entry name" value="DHHA1"/>
    <property type="match status" value="1"/>
</dbReference>
<dbReference type="Pfam" id="PF01411">
    <property type="entry name" value="tRNA-synt_2c"/>
    <property type="match status" value="1"/>
</dbReference>
<dbReference type="Pfam" id="PF07973">
    <property type="entry name" value="tRNA_SAD"/>
    <property type="match status" value="1"/>
</dbReference>
<dbReference type="PRINTS" id="PR00980">
    <property type="entry name" value="TRNASYNTHALA"/>
</dbReference>
<dbReference type="SMART" id="SM00863">
    <property type="entry name" value="tRNA_SAD"/>
    <property type="match status" value="1"/>
</dbReference>
<dbReference type="SUPFAM" id="SSF55681">
    <property type="entry name" value="Class II aaRS and biotin synthetases"/>
    <property type="match status" value="1"/>
</dbReference>
<dbReference type="SUPFAM" id="SSF101353">
    <property type="entry name" value="Putative anticodon-binding domain of alanyl-tRNA synthetase (AlaRS)"/>
    <property type="match status" value="1"/>
</dbReference>
<dbReference type="SUPFAM" id="SSF55186">
    <property type="entry name" value="ThrRS/AlaRS common domain"/>
    <property type="match status" value="1"/>
</dbReference>
<dbReference type="SUPFAM" id="SSF50447">
    <property type="entry name" value="Translation proteins"/>
    <property type="match status" value="1"/>
</dbReference>
<dbReference type="PROSITE" id="PS50860">
    <property type="entry name" value="AA_TRNA_LIGASE_II_ALA"/>
    <property type="match status" value="1"/>
</dbReference>
<organism>
    <name type="scientific">Bacillus cereus (strain ZK / E33L)</name>
    <dbReference type="NCBI Taxonomy" id="288681"/>
    <lineage>
        <taxon>Bacteria</taxon>
        <taxon>Bacillati</taxon>
        <taxon>Bacillota</taxon>
        <taxon>Bacilli</taxon>
        <taxon>Bacillales</taxon>
        <taxon>Bacillaceae</taxon>
        <taxon>Bacillus</taxon>
        <taxon>Bacillus cereus group</taxon>
    </lineage>
</organism>
<proteinExistence type="inferred from homology"/>
<feature type="chain" id="PRO_0000075053" description="Alanine--tRNA ligase">
    <location>
        <begin position="1"/>
        <end position="880"/>
    </location>
</feature>
<feature type="binding site" evidence="1">
    <location>
        <position position="567"/>
    </location>
    <ligand>
        <name>Zn(2+)</name>
        <dbReference type="ChEBI" id="CHEBI:29105"/>
    </ligand>
</feature>
<feature type="binding site" evidence="1">
    <location>
        <position position="571"/>
    </location>
    <ligand>
        <name>Zn(2+)</name>
        <dbReference type="ChEBI" id="CHEBI:29105"/>
    </ligand>
</feature>
<feature type="binding site" evidence="1">
    <location>
        <position position="669"/>
    </location>
    <ligand>
        <name>Zn(2+)</name>
        <dbReference type="ChEBI" id="CHEBI:29105"/>
    </ligand>
</feature>
<feature type="binding site" evidence="1">
    <location>
        <position position="673"/>
    </location>
    <ligand>
        <name>Zn(2+)</name>
        <dbReference type="ChEBI" id="CHEBI:29105"/>
    </ligand>
</feature>
<keyword id="KW-0030">Aminoacyl-tRNA synthetase</keyword>
<keyword id="KW-0067">ATP-binding</keyword>
<keyword id="KW-0963">Cytoplasm</keyword>
<keyword id="KW-0436">Ligase</keyword>
<keyword id="KW-0479">Metal-binding</keyword>
<keyword id="KW-0547">Nucleotide-binding</keyword>
<keyword id="KW-0648">Protein biosynthesis</keyword>
<keyword id="KW-0694">RNA-binding</keyword>
<keyword id="KW-0820">tRNA-binding</keyword>
<keyword id="KW-0862">Zinc</keyword>
<evidence type="ECO:0000255" key="1">
    <source>
        <dbReference type="HAMAP-Rule" id="MF_00036"/>
    </source>
</evidence>
<sequence>MKQLTGAQIRQMFLDFFQEKGHAVEPSASLVPHEDPSLLWINSGVATLKKYFDGRVIPQNPRITNAQKSIRTNDIENVGKTARHHTFFEMLGNFSIGDYFKEEAITWAWEFLTSDKWIGFDKELLSVTIHPEDEEAFTIWNEKMGVPKERIIRLEENFWDIGEGPSGPNTEIFYDRGEAYGNDFSDPELYPGGENERYLEVWNLVFSQFNHNPDGSYTPLPKKNIDTGMGLERMTSIVQDVPTNFDTDLFMPMIGATETISGEKYRNGDLEKDMAFKVIADHIRTVTFAVGDGALPSNEGRGYVLRRLLRRAVRYSKKLNINRPFMFELVPVVGEVMKDFYPEVLEKKDFIAKVVKNEEERFHETLHDGEAILAEVIAKAKEEKTTVISGVDAFRLYDTYGFPIELTEEYAEEAGMTVDHEGFENEMEKQRERARAARQDVDSMQVQGGVLGEVKVASEFVGYGTVATESNVVALVKNGEYTDSLQVGEEGQLMLDVTPFYAESGGQIADRGYLLADGVKVLVKDVQKAPNGQNLHKVVVEEGTLTKDAAVKAIIDTKNRSSVVKNHTATHLLHQALKDVLGTHVNQAGSLVTSERLRFDFSHFGQVQADELEKIERIVNEKIWESIDVEISQKAIEEAKEMGAMALFGEKYGDVVRVVQVGDYSLELCGGCHVDNTASIGIFKIVAESGIGAGTRRIEAVTGKSAYELMNDQVGLLKEAAGKMKTNPKDILTRVDGLFAEVKQLQKENESLAAKLSNIEAGNLTDSVMTVDGVNVLAAKVNVADMNNLRTMMDDLKNKLESAVVVLASVNDDKVNILAGVTKDLISQGYHAGKLVKEVASRCGGGGGGRPDMAQAGGKNPAQVEEALAFVQEYVKSVSK</sequence>
<comment type="function">
    <text evidence="1">Catalyzes the attachment of alanine to tRNA(Ala) in a two-step reaction: alanine is first activated by ATP to form Ala-AMP and then transferred to the acceptor end of tRNA(Ala). Also edits incorrectly charged Ser-tRNA(Ala) and Gly-tRNA(Ala) via its editing domain.</text>
</comment>
<comment type="catalytic activity">
    <reaction evidence="1">
        <text>tRNA(Ala) + L-alanine + ATP = L-alanyl-tRNA(Ala) + AMP + diphosphate</text>
        <dbReference type="Rhea" id="RHEA:12540"/>
        <dbReference type="Rhea" id="RHEA-COMP:9657"/>
        <dbReference type="Rhea" id="RHEA-COMP:9923"/>
        <dbReference type="ChEBI" id="CHEBI:30616"/>
        <dbReference type="ChEBI" id="CHEBI:33019"/>
        <dbReference type="ChEBI" id="CHEBI:57972"/>
        <dbReference type="ChEBI" id="CHEBI:78442"/>
        <dbReference type="ChEBI" id="CHEBI:78497"/>
        <dbReference type="ChEBI" id="CHEBI:456215"/>
        <dbReference type="EC" id="6.1.1.7"/>
    </reaction>
</comment>
<comment type="cofactor">
    <cofactor evidence="1">
        <name>Zn(2+)</name>
        <dbReference type="ChEBI" id="CHEBI:29105"/>
    </cofactor>
    <text evidence="1">Binds 1 zinc ion per subunit.</text>
</comment>
<comment type="subcellular location">
    <subcellularLocation>
        <location evidence="1">Cytoplasm</location>
    </subcellularLocation>
</comment>
<comment type="domain">
    <text evidence="1">Consists of three domains; the N-terminal catalytic domain, the editing domain and the C-terminal C-Ala domain. The editing domain removes incorrectly charged amino acids, while the C-Ala domain, along with tRNA(Ala), serves as a bridge to cooperatively bring together the editing and aminoacylation centers thus stimulating deacylation of misacylated tRNAs.</text>
</comment>
<comment type="similarity">
    <text evidence="1">Belongs to the class-II aminoacyl-tRNA synthetase family.</text>
</comment>